<sequence length="93" mass="10704">MDGIKYAVFTDKGVRLLGKNQYTSNVESGSTRTEIKHWVELFFGVKVQAMNSHRLPGKGRRMGPIMGHTMHYRRMIITLQPGYSIPPLRKKRT</sequence>
<reference key="1">
    <citation type="journal article" date="2000" name="Mol. Gen. Genet.">
        <title>Complete nucleotide sequence of the Oenothera elata plastid chromosome, representing plastome I of the five distinguishable Euoenothera plastomes.</title>
        <authorList>
            <person name="Hupfer H."/>
            <person name="Swiatek M."/>
            <person name="Hornung S."/>
            <person name="Herrmann R.G."/>
            <person name="Maier R.M."/>
            <person name="Chiu W.-L."/>
            <person name="Sears B."/>
        </authorList>
    </citation>
    <scope>NUCLEOTIDE SEQUENCE [LARGE SCALE GENOMIC DNA]</scope>
    <source>
        <strain>cv. Johansen</strain>
    </source>
</reference>
<geneLocation type="chloroplast"/>
<protein>
    <recommendedName>
        <fullName evidence="2">Large ribosomal subunit protein uL23cz/uL23cy</fullName>
    </recommendedName>
    <alternativeName>
        <fullName>50S ribosomal protein L23, chloroplastic</fullName>
    </alternativeName>
</protein>
<dbReference type="EMBL" id="AJ271079">
    <property type="protein sequence ID" value="CAB67202.1"/>
    <property type="molecule type" value="Genomic_DNA"/>
</dbReference>
<dbReference type="EMBL" id="AJ271079">
    <property type="protein sequence ID" value="CAB67243.1"/>
    <property type="molecule type" value="Genomic_DNA"/>
</dbReference>
<dbReference type="SMR" id="Q9MDA1"/>
<dbReference type="GO" id="GO:0009507">
    <property type="term" value="C:chloroplast"/>
    <property type="evidence" value="ECO:0007669"/>
    <property type="project" value="UniProtKB-SubCell"/>
</dbReference>
<dbReference type="GO" id="GO:1990904">
    <property type="term" value="C:ribonucleoprotein complex"/>
    <property type="evidence" value="ECO:0007669"/>
    <property type="project" value="UniProtKB-KW"/>
</dbReference>
<dbReference type="GO" id="GO:0005840">
    <property type="term" value="C:ribosome"/>
    <property type="evidence" value="ECO:0007669"/>
    <property type="project" value="UniProtKB-KW"/>
</dbReference>
<dbReference type="GO" id="GO:0003729">
    <property type="term" value="F:mRNA binding"/>
    <property type="evidence" value="ECO:0007669"/>
    <property type="project" value="UniProtKB-ARBA"/>
</dbReference>
<dbReference type="GO" id="GO:0019843">
    <property type="term" value="F:rRNA binding"/>
    <property type="evidence" value="ECO:0007669"/>
    <property type="project" value="UniProtKB-UniRule"/>
</dbReference>
<dbReference type="GO" id="GO:0003735">
    <property type="term" value="F:structural constituent of ribosome"/>
    <property type="evidence" value="ECO:0007669"/>
    <property type="project" value="InterPro"/>
</dbReference>
<dbReference type="GO" id="GO:0006412">
    <property type="term" value="P:translation"/>
    <property type="evidence" value="ECO:0007669"/>
    <property type="project" value="UniProtKB-UniRule"/>
</dbReference>
<dbReference type="FunFam" id="3.30.70.330:FF:000002">
    <property type="entry name" value="50S ribosomal protein L23, chloroplastic"/>
    <property type="match status" value="1"/>
</dbReference>
<dbReference type="Gene3D" id="3.30.70.330">
    <property type="match status" value="1"/>
</dbReference>
<dbReference type="HAMAP" id="MF_01369_B">
    <property type="entry name" value="Ribosomal_uL23_B"/>
    <property type="match status" value="1"/>
</dbReference>
<dbReference type="InterPro" id="IPR012677">
    <property type="entry name" value="Nucleotide-bd_a/b_plait_sf"/>
</dbReference>
<dbReference type="InterPro" id="IPR013025">
    <property type="entry name" value="Ribosomal_uL23-like"/>
</dbReference>
<dbReference type="InterPro" id="IPR012678">
    <property type="entry name" value="Ribosomal_uL23/eL15/eS24_sf"/>
</dbReference>
<dbReference type="InterPro" id="IPR001014">
    <property type="entry name" value="Ribosomal_uL23_CS"/>
</dbReference>
<dbReference type="PANTHER" id="PTHR11620">
    <property type="entry name" value="60S RIBOSOMAL PROTEIN L23A"/>
    <property type="match status" value="1"/>
</dbReference>
<dbReference type="Pfam" id="PF00276">
    <property type="entry name" value="Ribosomal_L23"/>
    <property type="match status" value="1"/>
</dbReference>
<dbReference type="SUPFAM" id="SSF54189">
    <property type="entry name" value="Ribosomal proteins S24e, L23 and L15e"/>
    <property type="match status" value="1"/>
</dbReference>
<dbReference type="PROSITE" id="PS00050">
    <property type="entry name" value="RIBOSOMAL_L23"/>
    <property type="match status" value="1"/>
</dbReference>
<organism>
    <name type="scientific">Oenothera elata subsp. hookeri</name>
    <name type="common">Hooker's evening primrose</name>
    <name type="synonym">Oenothera hookeri</name>
    <dbReference type="NCBI Taxonomy" id="85636"/>
    <lineage>
        <taxon>Eukaryota</taxon>
        <taxon>Viridiplantae</taxon>
        <taxon>Streptophyta</taxon>
        <taxon>Embryophyta</taxon>
        <taxon>Tracheophyta</taxon>
        <taxon>Spermatophyta</taxon>
        <taxon>Magnoliopsida</taxon>
        <taxon>eudicotyledons</taxon>
        <taxon>Gunneridae</taxon>
        <taxon>Pentapetalae</taxon>
        <taxon>rosids</taxon>
        <taxon>malvids</taxon>
        <taxon>Myrtales</taxon>
        <taxon>Onagraceae</taxon>
        <taxon>Onagroideae</taxon>
        <taxon>Onagreae</taxon>
        <taxon>Oenothera</taxon>
    </lineage>
</organism>
<proteinExistence type="inferred from homology"/>
<name>RK23_OENEH</name>
<gene>
    <name type="primary">rpl23-A</name>
</gene>
<gene>
    <name type="primary">rpl23-B</name>
</gene>
<accession>Q9MDA1</accession>
<keyword id="KW-0150">Chloroplast</keyword>
<keyword id="KW-0934">Plastid</keyword>
<keyword id="KW-0687">Ribonucleoprotein</keyword>
<keyword id="KW-0689">Ribosomal protein</keyword>
<keyword id="KW-0694">RNA-binding</keyword>
<keyword id="KW-0699">rRNA-binding</keyword>
<comment type="function">
    <text evidence="1">Binds to 23S rRNA.</text>
</comment>
<comment type="subunit">
    <text evidence="1">Part of the 50S ribosomal subunit.</text>
</comment>
<comment type="subcellular location">
    <subcellularLocation>
        <location>Plastid</location>
        <location>Chloroplast</location>
    </subcellularLocation>
</comment>
<comment type="similarity">
    <text evidence="2">Belongs to the universal ribosomal protein uL23 family.</text>
</comment>
<evidence type="ECO:0000250" key="1"/>
<evidence type="ECO:0000305" key="2"/>
<feature type="chain" id="PRO_0000272913" description="Large ribosomal subunit protein uL23cz/uL23cy">
    <location>
        <begin position="1"/>
        <end position="93"/>
    </location>
</feature>